<proteinExistence type="inferred from homology"/>
<gene>
    <name evidence="1" type="primary">rnpA</name>
    <name type="ordered locus">SNSL254_A4125</name>
</gene>
<comment type="function">
    <text evidence="1">RNaseP catalyzes the removal of the 5'-leader sequence from pre-tRNA to produce the mature 5'-terminus. It can also cleave other RNA substrates such as 4.5S RNA. The protein component plays an auxiliary but essential role in vivo by binding to the 5'-leader sequence and broadening the substrate specificity of the ribozyme.</text>
</comment>
<comment type="catalytic activity">
    <reaction evidence="1">
        <text>Endonucleolytic cleavage of RNA, removing 5'-extranucleotides from tRNA precursor.</text>
        <dbReference type="EC" id="3.1.26.5"/>
    </reaction>
</comment>
<comment type="subunit">
    <text evidence="1">Consists of a catalytic RNA component (M1 or rnpB) and a protein subunit.</text>
</comment>
<comment type="similarity">
    <text evidence="1">Belongs to the RnpA family.</text>
</comment>
<sequence length="119" mass="13782">MVKLAFPRELRLLTPAHFTFVFQQPQRAGTPQITILGRLNSLGHPRIGLTVAKKNVRRAHERNRIKRLTRESFRLRQHELPAMDFVVVAKKGVADLDNRALSEALEKLWRRHCRLARGS</sequence>
<organism>
    <name type="scientific">Salmonella newport (strain SL254)</name>
    <dbReference type="NCBI Taxonomy" id="423368"/>
    <lineage>
        <taxon>Bacteria</taxon>
        <taxon>Pseudomonadati</taxon>
        <taxon>Pseudomonadota</taxon>
        <taxon>Gammaproteobacteria</taxon>
        <taxon>Enterobacterales</taxon>
        <taxon>Enterobacteriaceae</taxon>
        <taxon>Salmonella</taxon>
    </lineage>
</organism>
<feature type="chain" id="PRO_1000100390" description="Ribonuclease P protein component">
    <location>
        <begin position="1"/>
        <end position="119"/>
    </location>
</feature>
<evidence type="ECO:0000255" key="1">
    <source>
        <dbReference type="HAMAP-Rule" id="MF_00227"/>
    </source>
</evidence>
<accession>B4SYB0</accession>
<name>RNPA_SALNS</name>
<dbReference type="EC" id="3.1.26.5" evidence="1"/>
<dbReference type="EMBL" id="CP001113">
    <property type="protein sequence ID" value="ACF61777.1"/>
    <property type="molecule type" value="Genomic_DNA"/>
</dbReference>
<dbReference type="RefSeq" id="WP_000239725.1">
    <property type="nucleotide sequence ID" value="NZ_CCMR01000001.1"/>
</dbReference>
<dbReference type="SMR" id="B4SYB0"/>
<dbReference type="GeneID" id="93035306"/>
<dbReference type="KEGG" id="see:SNSL254_A4125"/>
<dbReference type="HOGENOM" id="CLU_117179_11_0_6"/>
<dbReference type="Proteomes" id="UP000008824">
    <property type="component" value="Chromosome"/>
</dbReference>
<dbReference type="GO" id="GO:0030677">
    <property type="term" value="C:ribonuclease P complex"/>
    <property type="evidence" value="ECO:0007669"/>
    <property type="project" value="TreeGrafter"/>
</dbReference>
<dbReference type="GO" id="GO:0042781">
    <property type="term" value="F:3'-tRNA processing endoribonuclease activity"/>
    <property type="evidence" value="ECO:0007669"/>
    <property type="project" value="TreeGrafter"/>
</dbReference>
<dbReference type="GO" id="GO:0004526">
    <property type="term" value="F:ribonuclease P activity"/>
    <property type="evidence" value="ECO:0007669"/>
    <property type="project" value="UniProtKB-UniRule"/>
</dbReference>
<dbReference type="GO" id="GO:0000049">
    <property type="term" value="F:tRNA binding"/>
    <property type="evidence" value="ECO:0007669"/>
    <property type="project" value="UniProtKB-UniRule"/>
</dbReference>
<dbReference type="GO" id="GO:0001682">
    <property type="term" value="P:tRNA 5'-leader removal"/>
    <property type="evidence" value="ECO:0007669"/>
    <property type="project" value="UniProtKB-UniRule"/>
</dbReference>
<dbReference type="FunFam" id="3.30.230.10:FF:000016">
    <property type="entry name" value="Ribonuclease P protein component"/>
    <property type="match status" value="1"/>
</dbReference>
<dbReference type="Gene3D" id="3.30.230.10">
    <property type="match status" value="1"/>
</dbReference>
<dbReference type="HAMAP" id="MF_00227">
    <property type="entry name" value="RNase_P"/>
    <property type="match status" value="1"/>
</dbReference>
<dbReference type="InterPro" id="IPR020568">
    <property type="entry name" value="Ribosomal_Su5_D2-typ_SF"/>
</dbReference>
<dbReference type="InterPro" id="IPR014721">
    <property type="entry name" value="Ribsml_uS5_D2-typ_fold_subgr"/>
</dbReference>
<dbReference type="InterPro" id="IPR000100">
    <property type="entry name" value="RNase_P"/>
</dbReference>
<dbReference type="InterPro" id="IPR020539">
    <property type="entry name" value="RNase_P_CS"/>
</dbReference>
<dbReference type="NCBIfam" id="TIGR00188">
    <property type="entry name" value="rnpA"/>
    <property type="match status" value="1"/>
</dbReference>
<dbReference type="PANTHER" id="PTHR33992">
    <property type="entry name" value="RIBONUCLEASE P PROTEIN COMPONENT"/>
    <property type="match status" value="1"/>
</dbReference>
<dbReference type="PANTHER" id="PTHR33992:SF1">
    <property type="entry name" value="RIBONUCLEASE P PROTEIN COMPONENT"/>
    <property type="match status" value="1"/>
</dbReference>
<dbReference type="Pfam" id="PF00825">
    <property type="entry name" value="Ribonuclease_P"/>
    <property type="match status" value="1"/>
</dbReference>
<dbReference type="SUPFAM" id="SSF54211">
    <property type="entry name" value="Ribosomal protein S5 domain 2-like"/>
    <property type="match status" value="1"/>
</dbReference>
<dbReference type="PROSITE" id="PS00648">
    <property type="entry name" value="RIBONUCLEASE_P"/>
    <property type="match status" value="1"/>
</dbReference>
<reference key="1">
    <citation type="journal article" date="2011" name="J. Bacteriol.">
        <title>Comparative genomics of 28 Salmonella enterica isolates: evidence for CRISPR-mediated adaptive sublineage evolution.</title>
        <authorList>
            <person name="Fricke W.F."/>
            <person name="Mammel M.K."/>
            <person name="McDermott P.F."/>
            <person name="Tartera C."/>
            <person name="White D.G."/>
            <person name="Leclerc J.E."/>
            <person name="Ravel J."/>
            <person name="Cebula T.A."/>
        </authorList>
    </citation>
    <scope>NUCLEOTIDE SEQUENCE [LARGE SCALE GENOMIC DNA]</scope>
    <source>
        <strain>SL254</strain>
    </source>
</reference>
<keyword id="KW-0255">Endonuclease</keyword>
<keyword id="KW-0378">Hydrolase</keyword>
<keyword id="KW-0540">Nuclease</keyword>
<keyword id="KW-0694">RNA-binding</keyword>
<keyword id="KW-0819">tRNA processing</keyword>
<protein>
    <recommendedName>
        <fullName evidence="1">Ribonuclease P protein component</fullName>
        <shortName evidence="1">RNase P protein</shortName>
        <shortName evidence="1">RNaseP protein</shortName>
        <ecNumber evidence="1">3.1.26.5</ecNumber>
    </recommendedName>
    <alternativeName>
        <fullName evidence="1">Protein C5</fullName>
    </alternativeName>
</protein>